<name>RK36_CHAGL</name>
<organism>
    <name type="scientific">Chaetosphaeridium globosum</name>
    <name type="common">Charophycean green alga</name>
    <name type="synonym">Herposteiron globosum</name>
    <dbReference type="NCBI Taxonomy" id="96477"/>
    <lineage>
        <taxon>Eukaryota</taxon>
        <taxon>Viridiplantae</taxon>
        <taxon>Streptophyta</taxon>
        <taxon>Coleochaetophyceae</taxon>
        <taxon>Coleochaetales</taxon>
        <taxon>Chaetosphaeridiaceae</taxon>
        <taxon>Chaetosphaeridium</taxon>
    </lineage>
</organism>
<proteinExistence type="inferred from homology"/>
<gene>
    <name evidence="1" type="primary">rpl36</name>
</gene>
<protein>
    <recommendedName>
        <fullName evidence="1">Large ribosomal subunit protein bL36c</fullName>
    </recommendedName>
    <alternativeName>
        <fullName evidence="2">50S ribosomal protein L36, chloroplastic</fullName>
    </alternativeName>
</protein>
<feature type="chain" id="PRO_0000126314" description="Large ribosomal subunit protein bL36c">
    <location>
        <begin position="1"/>
        <end position="37"/>
    </location>
</feature>
<geneLocation type="chloroplast"/>
<accession>Q8M9V5</accession>
<comment type="subcellular location">
    <subcellularLocation>
        <location>Plastid</location>
        <location>Chloroplast</location>
    </subcellularLocation>
</comment>
<comment type="similarity">
    <text evidence="1">Belongs to the bacterial ribosomal protein bL36 family.</text>
</comment>
<reference key="1">
    <citation type="journal article" date="2002" name="Proc. Natl. Acad. Sci. U.S.A.">
        <title>The chloroplast and mitochondrial genome sequences of the charophyte Chaetosphaeridium globosum: insights into the timing of the events that restructured organelle DNAs within the green algal lineage that led to land plants.</title>
        <authorList>
            <person name="Turmel M."/>
            <person name="Otis C."/>
            <person name="Lemieux C."/>
        </authorList>
    </citation>
    <scope>NUCLEOTIDE SEQUENCE [LARGE SCALE GENOMIC DNA]</scope>
    <source>
        <strain>M1311</strain>
    </source>
</reference>
<evidence type="ECO:0000255" key="1">
    <source>
        <dbReference type="HAMAP-Rule" id="MF_00251"/>
    </source>
</evidence>
<evidence type="ECO:0000305" key="2"/>
<keyword id="KW-0150">Chloroplast</keyword>
<keyword id="KW-0934">Plastid</keyword>
<keyword id="KW-0687">Ribonucleoprotein</keyword>
<keyword id="KW-0689">Ribosomal protein</keyword>
<dbReference type="EMBL" id="AF494278">
    <property type="protein sequence ID" value="AAM96563.1"/>
    <property type="molecule type" value="Genomic_DNA"/>
</dbReference>
<dbReference type="RefSeq" id="NP_683834.1">
    <property type="nucleotide sequence ID" value="NC_004115.1"/>
</dbReference>
<dbReference type="SMR" id="Q8M9V5"/>
<dbReference type="GeneID" id="860719"/>
<dbReference type="GO" id="GO:0009507">
    <property type="term" value="C:chloroplast"/>
    <property type="evidence" value="ECO:0007669"/>
    <property type="project" value="UniProtKB-SubCell"/>
</dbReference>
<dbReference type="GO" id="GO:1990904">
    <property type="term" value="C:ribonucleoprotein complex"/>
    <property type="evidence" value="ECO:0007669"/>
    <property type="project" value="UniProtKB-KW"/>
</dbReference>
<dbReference type="GO" id="GO:0005840">
    <property type="term" value="C:ribosome"/>
    <property type="evidence" value="ECO:0007669"/>
    <property type="project" value="UniProtKB-KW"/>
</dbReference>
<dbReference type="GO" id="GO:0003735">
    <property type="term" value="F:structural constituent of ribosome"/>
    <property type="evidence" value="ECO:0007669"/>
    <property type="project" value="InterPro"/>
</dbReference>
<dbReference type="GO" id="GO:0006412">
    <property type="term" value="P:translation"/>
    <property type="evidence" value="ECO:0007669"/>
    <property type="project" value="UniProtKB-UniRule"/>
</dbReference>
<dbReference type="HAMAP" id="MF_00251">
    <property type="entry name" value="Ribosomal_bL36"/>
    <property type="match status" value="1"/>
</dbReference>
<dbReference type="InterPro" id="IPR000473">
    <property type="entry name" value="Ribosomal_bL36"/>
</dbReference>
<dbReference type="InterPro" id="IPR035977">
    <property type="entry name" value="Ribosomal_bL36_sp"/>
</dbReference>
<dbReference type="NCBIfam" id="TIGR01022">
    <property type="entry name" value="rpmJ_bact"/>
    <property type="match status" value="1"/>
</dbReference>
<dbReference type="PANTHER" id="PTHR42888">
    <property type="entry name" value="50S RIBOSOMAL PROTEIN L36, CHLOROPLASTIC"/>
    <property type="match status" value="1"/>
</dbReference>
<dbReference type="PANTHER" id="PTHR42888:SF1">
    <property type="entry name" value="LARGE RIBOSOMAL SUBUNIT PROTEIN BL36C"/>
    <property type="match status" value="1"/>
</dbReference>
<dbReference type="Pfam" id="PF00444">
    <property type="entry name" value="Ribosomal_L36"/>
    <property type="match status" value="1"/>
</dbReference>
<dbReference type="SUPFAM" id="SSF57840">
    <property type="entry name" value="Ribosomal protein L36"/>
    <property type="match status" value="1"/>
</dbReference>
<dbReference type="PROSITE" id="PS00828">
    <property type="entry name" value="RIBOSOMAL_L36"/>
    <property type="match status" value="1"/>
</dbReference>
<sequence>MKVQASVRKICENCRLIRRRRRVMVVCKNPKHKQRQG</sequence>